<accession>P25876</accession>
<accession>A1E9H5</accession>
<sequence>MLTLKLFVYTVVIFFVSLFIFGFLSNDPGRNPGREE</sequence>
<organism>
    <name type="scientific">Hordeum vulgare</name>
    <name type="common">Barley</name>
    <dbReference type="NCBI Taxonomy" id="4513"/>
    <lineage>
        <taxon>Eukaryota</taxon>
        <taxon>Viridiplantae</taxon>
        <taxon>Streptophyta</taxon>
        <taxon>Embryophyta</taxon>
        <taxon>Tracheophyta</taxon>
        <taxon>Spermatophyta</taxon>
        <taxon>Magnoliopsida</taxon>
        <taxon>Liliopsida</taxon>
        <taxon>Poales</taxon>
        <taxon>Poaceae</taxon>
        <taxon>BOP clade</taxon>
        <taxon>Pooideae</taxon>
        <taxon>Triticodae</taxon>
        <taxon>Triticeae</taxon>
        <taxon>Hordeinae</taxon>
        <taxon>Hordeum</taxon>
    </lineage>
</organism>
<proteinExistence type="evidence at protein level"/>
<reference key="1">
    <citation type="journal article" date="1990" name="Curr. Genet.">
        <title>Sequence and transcriptional analysis of the barley ctDNA region upstream of psbD-psbC encoding trnK(UUU), rps16, trnQ(UUG), psbK, psbI, and trnS(GCU).</title>
        <authorList>
            <person name="Sexton T.B."/>
            <person name="Jones J.T."/>
            <person name="Mullet J.E."/>
        </authorList>
    </citation>
    <scope>NUCLEOTIDE SEQUENCE [GENOMIC DNA]</scope>
    <source>
        <tissue>Seedling</tissue>
    </source>
</reference>
<reference key="2">
    <citation type="journal article" date="2007" name="Theor. Appl. Genet.">
        <title>Complete chloroplast genome sequences of Hordeum vulgare, Sorghum bicolor and Agrostis stolonifera, and comparative analyses with other grass genomes.</title>
        <authorList>
            <person name="Saski C."/>
            <person name="Lee S.-B."/>
            <person name="Fjellheim S."/>
            <person name="Guda C."/>
            <person name="Jansen R.K."/>
            <person name="Luo H."/>
            <person name="Tomkins J."/>
            <person name="Rognli O.A."/>
            <person name="Daniell H."/>
            <person name="Clarke J.L."/>
        </authorList>
    </citation>
    <scope>NUCLEOTIDE SEQUENCE [LARGE SCALE GENOMIC DNA]</scope>
    <source>
        <strain>cv. Morex</strain>
    </source>
</reference>
<reference key="3">
    <citation type="journal article" date="2009" name="Proteomics">
        <title>Mass spectrometric characterization of membrane integral low molecular weight proteins from photosystem II in barley etioplasts.</title>
        <authorList>
            <person name="Ploescher M."/>
            <person name="Granvogl B."/>
            <person name="Zoryan M."/>
            <person name="Reisinger V."/>
            <person name="Eichacker L.A."/>
        </authorList>
    </citation>
    <scope>IDENTIFICATION BY MASS SPECTROMETRY</scope>
    <scope>SUBUNIT</scope>
    <scope>SUBCELLULAR LOCATION</scope>
    <source>
        <strain>cv. Steffi</strain>
    </source>
</reference>
<geneLocation type="chloroplast"/>
<evidence type="ECO:0000255" key="1">
    <source>
        <dbReference type="HAMAP-Rule" id="MF_01316"/>
    </source>
</evidence>
<evidence type="ECO:0000269" key="2">
    <source>
    </source>
</evidence>
<evidence type="ECO:0000305" key="3"/>
<evidence type="ECO:0000305" key="4">
    <source>
    </source>
</evidence>
<gene>
    <name evidence="1" type="primary">psbI</name>
</gene>
<dbReference type="EMBL" id="X52765">
    <property type="protein sequence ID" value="CAA36974.1"/>
    <property type="molecule type" value="Genomic_DNA"/>
</dbReference>
<dbReference type="EMBL" id="EF115541">
    <property type="protein sequence ID" value="ABK79397.1"/>
    <property type="molecule type" value="Genomic_DNA"/>
</dbReference>
<dbReference type="PIR" id="S28767">
    <property type="entry name" value="S28767"/>
</dbReference>
<dbReference type="RefSeq" id="YP_010144409.1">
    <property type="nucleotide sequence ID" value="NC_056985.1"/>
</dbReference>
<dbReference type="RefSeq" id="YP_874637.1">
    <property type="nucleotide sequence ID" value="NC_008590.1"/>
</dbReference>
<dbReference type="SMR" id="P25876"/>
<dbReference type="GeneID" id="4525149"/>
<dbReference type="GeneID" id="67140659"/>
<dbReference type="GO" id="GO:0009535">
    <property type="term" value="C:chloroplast thylakoid membrane"/>
    <property type="evidence" value="ECO:0007669"/>
    <property type="project" value="UniProtKB-SubCell"/>
</dbReference>
<dbReference type="GO" id="GO:0009539">
    <property type="term" value="C:photosystem II reaction center"/>
    <property type="evidence" value="ECO:0007669"/>
    <property type="project" value="InterPro"/>
</dbReference>
<dbReference type="GO" id="GO:0015979">
    <property type="term" value="P:photosynthesis"/>
    <property type="evidence" value="ECO:0007669"/>
    <property type="project" value="UniProtKB-UniRule"/>
</dbReference>
<dbReference type="HAMAP" id="MF_01316">
    <property type="entry name" value="PSII_PsbI"/>
    <property type="match status" value="1"/>
</dbReference>
<dbReference type="InterPro" id="IPR003686">
    <property type="entry name" value="PSII_PsbI"/>
</dbReference>
<dbReference type="InterPro" id="IPR037271">
    <property type="entry name" value="PSII_PsbI_sf"/>
</dbReference>
<dbReference type="NCBIfam" id="NF002735">
    <property type="entry name" value="PRK02655.1"/>
    <property type="match status" value="1"/>
</dbReference>
<dbReference type="PANTHER" id="PTHR35772">
    <property type="entry name" value="PHOTOSYSTEM II REACTION CENTER PROTEIN I"/>
    <property type="match status" value="1"/>
</dbReference>
<dbReference type="PANTHER" id="PTHR35772:SF1">
    <property type="entry name" value="PHOTOSYSTEM II REACTION CENTER PROTEIN I"/>
    <property type="match status" value="1"/>
</dbReference>
<dbReference type="Pfam" id="PF02532">
    <property type="entry name" value="PsbI"/>
    <property type="match status" value="1"/>
</dbReference>
<dbReference type="SUPFAM" id="SSF161041">
    <property type="entry name" value="Photosystem II reaction center protein I, PsbI"/>
    <property type="match status" value="1"/>
</dbReference>
<feature type="chain" id="PRO_0000219629" description="Photosystem II reaction center protein I">
    <location>
        <begin position="1"/>
        <end position="36"/>
    </location>
</feature>
<feature type="transmembrane region" description="Helical" evidence="1">
    <location>
        <begin position="4"/>
        <end position="24"/>
    </location>
</feature>
<feature type="sequence conflict" description="In Ref. 1; CAA36974." evidence="3" ref="1">
    <original>E</original>
    <variation>Q</variation>
    <location>
        <position position="35"/>
    </location>
</feature>
<protein>
    <recommendedName>
        <fullName evidence="1">Photosystem II reaction center protein I</fullName>
        <shortName evidence="1">PSII-I</shortName>
    </recommendedName>
    <alternativeName>
        <fullName evidence="1">PSII 4.8 kDa protein</fullName>
    </alternativeName>
</protein>
<keyword id="KW-0150">Chloroplast</keyword>
<keyword id="KW-0472">Membrane</keyword>
<keyword id="KW-0602">Photosynthesis</keyword>
<keyword id="KW-0604">Photosystem II</keyword>
<keyword id="KW-0934">Plastid</keyword>
<keyword id="KW-0674">Reaction center</keyword>
<keyword id="KW-0793">Thylakoid</keyword>
<keyword id="KW-0812">Transmembrane</keyword>
<keyword id="KW-1133">Transmembrane helix</keyword>
<comment type="function">
    <text evidence="1">One of the components of the core complex of photosystem II (PSII), required for its stability and/or assembly. PSII is a light-driven water:plastoquinone oxidoreductase that uses light energy to abstract electrons from H(2)O, generating O(2) and a proton gradient subsequently used for ATP formation. It consists of a core antenna complex that captures photons, and an electron transfer chain that converts photonic excitation into a charge separation.</text>
</comment>
<comment type="subunit">
    <text evidence="1 2">PSII is composed of 1 copy each of membrane proteins PsbA, PsbB, PsbC, PsbD, PsbE, PsbF, PsbH, PsbI, PsbJ, PsbK, PsbL, PsbM, PsbT, PsbX, PsbY, PsbZ, Psb30/Ycf12, at least 3 peripheral proteins of the oxygen-evolving complex and a large number of cofactors. It forms dimeric complexes (By similarity). Detected in both etioplasts and green leaves; PSII is only assembled in green leaves (PubMed:19137553).</text>
</comment>
<comment type="subcellular location">
    <subcellularLocation>
        <location evidence="1 4">Plastid</location>
        <location evidence="1 4">Chloroplast thylakoid membrane</location>
        <topology evidence="1 4">Single-pass membrane protein</topology>
    </subcellularLocation>
</comment>
<comment type="similarity">
    <text evidence="1">Belongs to the PsbI family.</text>
</comment>
<name>PSBI_HORVU</name>